<keyword id="KW-0687">Ribonucleoprotein</keyword>
<keyword id="KW-0689">Ribosomal protein</keyword>
<keyword id="KW-0694">RNA-binding</keyword>
<keyword id="KW-0699">rRNA-binding</keyword>
<organism>
    <name type="scientific">Staphylococcus aureus</name>
    <dbReference type="NCBI Taxonomy" id="1280"/>
    <lineage>
        <taxon>Bacteria</taxon>
        <taxon>Bacillati</taxon>
        <taxon>Bacillota</taxon>
        <taxon>Bacilli</taxon>
        <taxon>Bacillales</taxon>
        <taxon>Staphylococcaceae</taxon>
        <taxon>Staphylococcus</taxon>
    </lineage>
</organism>
<proteinExistence type="inferred from homology"/>
<sequence>MFAIIETGGKQIKVEEGQEIFVEKLDVNEGDTFTFDKVLFVGGDSVKVGAPTVEGATVTATVNKQGRGKKITVFTYKRRKNSXRKKGHRQPYTKLTIDKINA</sequence>
<protein>
    <recommendedName>
        <fullName evidence="1">Large ribosomal subunit protein bL21</fullName>
    </recommendedName>
    <alternativeName>
        <fullName evidence="2">50S ribosomal protein L21</fullName>
    </alternativeName>
</protein>
<dbReference type="EMBL" id="AF349567">
    <property type="protein sequence ID" value="AAK52740.1"/>
    <property type="molecule type" value="Genomic_DNA"/>
</dbReference>
<dbReference type="GO" id="GO:0005737">
    <property type="term" value="C:cytoplasm"/>
    <property type="evidence" value="ECO:0007669"/>
    <property type="project" value="UniProtKB-ARBA"/>
</dbReference>
<dbReference type="GO" id="GO:1990904">
    <property type="term" value="C:ribonucleoprotein complex"/>
    <property type="evidence" value="ECO:0007669"/>
    <property type="project" value="UniProtKB-KW"/>
</dbReference>
<dbReference type="GO" id="GO:0005840">
    <property type="term" value="C:ribosome"/>
    <property type="evidence" value="ECO:0007669"/>
    <property type="project" value="UniProtKB-KW"/>
</dbReference>
<dbReference type="GO" id="GO:0019843">
    <property type="term" value="F:rRNA binding"/>
    <property type="evidence" value="ECO:0007669"/>
    <property type="project" value="UniProtKB-UniRule"/>
</dbReference>
<dbReference type="GO" id="GO:0003735">
    <property type="term" value="F:structural constituent of ribosome"/>
    <property type="evidence" value="ECO:0007669"/>
    <property type="project" value="InterPro"/>
</dbReference>
<dbReference type="GO" id="GO:0006412">
    <property type="term" value="P:translation"/>
    <property type="evidence" value="ECO:0007669"/>
    <property type="project" value="UniProtKB-UniRule"/>
</dbReference>
<dbReference type="HAMAP" id="MF_01363">
    <property type="entry name" value="Ribosomal_bL21"/>
    <property type="match status" value="1"/>
</dbReference>
<dbReference type="InterPro" id="IPR028909">
    <property type="entry name" value="bL21-like"/>
</dbReference>
<dbReference type="InterPro" id="IPR036164">
    <property type="entry name" value="bL21-like_sf"/>
</dbReference>
<dbReference type="InterPro" id="IPR001787">
    <property type="entry name" value="Ribosomal_bL21"/>
</dbReference>
<dbReference type="NCBIfam" id="TIGR00061">
    <property type="entry name" value="L21"/>
    <property type="match status" value="1"/>
</dbReference>
<dbReference type="PANTHER" id="PTHR21349">
    <property type="entry name" value="50S RIBOSOMAL PROTEIN L21"/>
    <property type="match status" value="1"/>
</dbReference>
<dbReference type="PANTHER" id="PTHR21349:SF0">
    <property type="entry name" value="LARGE RIBOSOMAL SUBUNIT PROTEIN BL21M"/>
    <property type="match status" value="1"/>
</dbReference>
<dbReference type="Pfam" id="PF00829">
    <property type="entry name" value="Ribosomal_L21p"/>
    <property type="match status" value="1"/>
</dbReference>
<dbReference type="SUPFAM" id="SSF141091">
    <property type="entry name" value="L21p-like"/>
    <property type="match status" value="1"/>
</dbReference>
<evidence type="ECO:0000255" key="1">
    <source>
        <dbReference type="HAMAP-Rule" id="MF_01363"/>
    </source>
</evidence>
<evidence type="ECO:0000305" key="2"/>
<reference key="1">
    <citation type="journal article" date="2001" name="Vet. Microbiol.">
        <title>Sequence analysis of a RAPD band differentiating high and low virulence Staphylococcus aureus strains from rabbits.</title>
        <authorList>
            <person name="Hermans K."/>
            <person name="De Herdt P."/>
            <person name="Baele M."/>
            <person name="Devriese L.A."/>
            <person name="Haesebrouck F."/>
        </authorList>
    </citation>
    <scope>NUCLEOTIDE SEQUENCE [GENOMIC DNA]</scope>
</reference>
<name>RL21_STAAU</name>
<comment type="function">
    <text evidence="1">This protein binds to 23S rRNA in the presence of protein L20.</text>
</comment>
<comment type="subunit">
    <text evidence="1">Part of the 50S ribosomal subunit. Contacts protein L20.</text>
</comment>
<comment type="similarity">
    <text evidence="1">Belongs to the bacterial ribosomal protein bL21 family.</text>
</comment>
<feature type="chain" id="PRO_0000224932" description="Large ribosomal subunit protein bL21">
    <location>
        <begin position="1"/>
        <end position="102"/>
    </location>
</feature>
<accession>Q93EP0</accession>
<gene>
    <name evidence="1" type="primary">rplU</name>
</gene>